<reference key="1">
    <citation type="journal article" date="1995" name="Nature">
        <title>Insertions and duplications of mtDNA in the nuclear genomes of Old World monkeys and hominoids.</title>
        <authorList>
            <person name="Collura R.V."/>
            <person name="Stewart C.-B.R."/>
        </authorList>
    </citation>
    <scope>NUCLEOTIDE SEQUENCE [GENOMIC DNA]</scope>
</reference>
<reference key="2">
    <citation type="journal article" date="1996" name="Proc. Natl. Acad. Sci. U.S.A.">
        <title>Ancient single origin for Malagasy primates.</title>
        <authorList>
            <person name="Yoder A.D."/>
            <person name="Cartmill M."/>
            <person name="Ruvolo M."/>
            <person name="Smith K."/>
            <person name="Vilgalys R."/>
        </authorList>
    </citation>
    <scope>NUCLEOTIDE SEQUENCE [GENOMIC DNA]</scope>
</reference>
<proteinExistence type="inferred from homology"/>
<protein>
    <recommendedName>
        <fullName>Cytochrome b</fullName>
    </recommendedName>
    <alternativeName>
        <fullName>Complex III subunit 3</fullName>
    </alternativeName>
    <alternativeName>
        <fullName>Complex III subunit III</fullName>
    </alternativeName>
    <alternativeName>
        <fullName>Cytochrome b-c1 complex subunit 3</fullName>
    </alternativeName>
    <alternativeName>
        <fullName>Ubiquinol-cytochrome-c reductase complex cytochrome b subunit</fullName>
    </alternativeName>
</protein>
<evidence type="ECO:0000250" key="1"/>
<evidence type="ECO:0000250" key="2">
    <source>
        <dbReference type="UniProtKB" id="P00157"/>
    </source>
</evidence>
<evidence type="ECO:0000255" key="3">
    <source>
        <dbReference type="PROSITE-ProRule" id="PRU00967"/>
    </source>
</evidence>
<evidence type="ECO:0000255" key="4">
    <source>
        <dbReference type="PROSITE-ProRule" id="PRU00968"/>
    </source>
</evidence>
<evidence type="ECO:0000305" key="5"/>
<feature type="chain" id="PRO_0000061511" description="Cytochrome b">
    <location>
        <begin position="1"/>
        <end position="379"/>
    </location>
</feature>
<feature type="transmembrane region" description="Helical" evidence="2">
    <location>
        <begin position="33"/>
        <end position="53"/>
    </location>
</feature>
<feature type="transmembrane region" description="Helical" evidence="2">
    <location>
        <begin position="77"/>
        <end position="98"/>
    </location>
</feature>
<feature type="transmembrane region" description="Helical" evidence="2">
    <location>
        <begin position="113"/>
        <end position="133"/>
    </location>
</feature>
<feature type="transmembrane region" description="Helical" evidence="2">
    <location>
        <begin position="178"/>
        <end position="198"/>
    </location>
</feature>
<feature type="transmembrane region" description="Helical" evidence="2">
    <location>
        <begin position="226"/>
        <end position="246"/>
    </location>
</feature>
<feature type="transmembrane region" description="Helical" evidence="2">
    <location>
        <begin position="288"/>
        <end position="308"/>
    </location>
</feature>
<feature type="transmembrane region" description="Helical" evidence="2">
    <location>
        <begin position="320"/>
        <end position="340"/>
    </location>
</feature>
<feature type="transmembrane region" description="Helical" evidence="2">
    <location>
        <begin position="347"/>
        <end position="367"/>
    </location>
</feature>
<feature type="binding site" description="axial binding residue" evidence="2">
    <location>
        <position position="83"/>
    </location>
    <ligand>
        <name>heme b</name>
        <dbReference type="ChEBI" id="CHEBI:60344"/>
        <label>b562</label>
    </ligand>
    <ligandPart>
        <name>Fe</name>
        <dbReference type="ChEBI" id="CHEBI:18248"/>
    </ligandPart>
</feature>
<feature type="binding site" description="axial binding residue" evidence="2">
    <location>
        <position position="97"/>
    </location>
    <ligand>
        <name>heme b</name>
        <dbReference type="ChEBI" id="CHEBI:60344"/>
        <label>b566</label>
    </ligand>
    <ligandPart>
        <name>Fe</name>
        <dbReference type="ChEBI" id="CHEBI:18248"/>
    </ligandPart>
</feature>
<feature type="binding site" description="axial binding residue" evidence="2">
    <location>
        <position position="182"/>
    </location>
    <ligand>
        <name>heme b</name>
        <dbReference type="ChEBI" id="CHEBI:60344"/>
        <label>b562</label>
    </ligand>
    <ligandPart>
        <name>Fe</name>
        <dbReference type="ChEBI" id="CHEBI:18248"/>
    </ligandPart>
</feature>
<feature type="binding site" description="axial binding residue" evidence="2">
    <location>
        <position position="196"/>
    </location>
    <ligand>
        <name>heme b</name>
        <dbReference type="ChEBI" id="CHEBI:60344"/>
        <label>b566</label>
    </ligand>
    <ligandPart>
        <name>Fe</name>
        <dbReference type="ChEBI" id="CHEBI:18248"/>
    </ligandPart>
</feature>
<feature type="binding site" evidence="2">
    <location>
        <position position="201"/>
    </location>
    <ligand>
        <name>a ubiquinone</name>
        <dbReference type="ChEBI" id="CHEBI:16389"/>
    </ligand>
</feature>
<feature type="sequence conflict" description="In Ref. 2; AAC50533." evidence="5" ref="2">
    <original>H</original>
    <variation>N</variation>
    <location>
        <position position="206"/>
    </location>
</feature>
<keyword id="KW-0249">Electron transport</keyword>
<keyword id="KW-0349">Heme</keyword>
<keyword id="KW-0408">Iron</keyword>
<keyword id="KW-0472">Membrane</keyword>
<keyword id="KW-0479">Metal-binding</keyword>
<keyword id="KW-0496">Mitochondrion</keyword>
<keyword id="KW-0999">Mitochondrion inner membrane</keyword>
<keyword id="KW-0679">Respiratory chain</keyword>
<keyword id="KW-0812">Transmembrane</keyword>
<keyword id="KW-1133">Transmembrane helix</keyword>
<keyword id="KW-0813">Transport</keyword>
<keyword id="KW-0830">Ubiquinone</keyword>
<dbReference type="EMBL" id="U38273">
    <property type="protein sequence ID" value="AAA98464.1"/>
    <property type="molecule type" value="Genomic_DNA"/>
</dbReference>
<dbReference type="EMBL" id="U53582">
    <property type="protein sequence ID" value="AAC50533.1"/>
    <property type="molecule type" value="Genomic_DNA"/>
</dbReference>
<dbReference type="RefSeq" id="YP_002929489.1">
    <property type="nucleotide sequence ID" value="NC_012775.1"/>
</dbReference>
<dbReference type="SMR" id="Q35930"/>
<dbReference type="GeneID" id="7944488"/>
<dbReference type="CTD" id="4519"/>
<dbReference type="GO" id="GO:0005743">
    <property type="term" value="C:mitochondrial inner membrane"/>
    <property type="evidence" value="ECO:0007669"/>
    <property type="project" value="UniProtKB-SubCell"/>
</dbReference>
<dbReference type="GO" id="GO:0045275">
    <property type="term" value="C:respiratory chain complex III"/>
    <property type="evidence" value="ECO:0007669"/>
    <property type="project" value="InterPro"/>
</dbReference>
<dbReference type="GO" id="GO:0046872">
    <property type="term" value="F:metal ion binding"/>
    <property type="evidence" value="ECO:0007669"/>
    <property type="project" value="UniProtKB-KW"/>
</dbReference>
<dbReference type="GO" id="GO:0008121">
    <property type="term" value="F:ubiquinol-cytochrome-c reductase activity"/>
    <property type="evidence" value="ECO:0007669"/>
    <property type="project" value="InterPro"/>
</dbReference>
<dbReference type="GO" id="GO:0006122">
    <property type="term" value="P:mitochondrial electron transport, ubiquinol to cytochrome c"/>
    <property type="evidence" value="ECO:0007669"/>
    <property type="project" value="TreeGrafter"/>
</dbReference>
<dbReference type="CDD" id="cd00290">
    <property type="entry name" value="cytochrome_b_C"/>
    <property type="match status" value="1"/>
</dbReference>
<dbReference type="CDD" id="cd00284">
    <property type="entry name" value="Cytochrome_b_N"/>
    <property type="match status" value="1"/>
</dbReference>
<dbReference type="FunFam" id="1.20.810.10:FF:000002">
    <property type="entry name" value="Cytochrome b"/>
    <property type="match status" value="1"/>
</dbReference>
<dbReference type="Gene3D" id="1.20.810.10">
    <property type="entry name" value="Cytochrome Bc1 Complex, Chain C"/>
    <property type="match status" value="1"/>
</dbReference>
<dbReference type="InterPro" id="IPR005798">
    <property type="entry name" value="Cyt_b/b6_C"/>
</dbReference>
<dbReference type="InterPro" id="IPR036150">
    <property type="entry name" value="Cyt_b/b6_C_sf"/>
</dbReference>
<dbReference type="InterPro" id="IPR005797">
    <property type="entry name" value="Cyt_b/b6_N"/>
</dbReference>
<dbReference type="InterPro" id="IPR027387">
    <property type="entry name" value="Cytb/b6-like_sf"/>
</dbReference>
<dbReference type="InterPro" id="IPR030689">
    <property type="entry name" value="Cytochrome_b"/>
</dbReference>
<dbReference type="InterPro" id="IPR048260">
    <property type="entry name" value="Cytochrome_b_C_euk/bac"/>
</dbReference>
<dbReference type="InterPro" id="IPR048259">
    <property type="entry name" value="Cytochrome_b_N_euk/bac"/>
</dbReference>
<dbReference type="InterPro" id="IPR016174">
    <property type="entry name" value="Di-haem_cyt_TM"/>
</dbReference>
<dbReference type="PANTHER" id="PTHR19271">
    <property type="entry name" value="CYTOCHROME B"/>
    <property type="match status" value="1"/>
</dbReference>
<dbReference type="PANTHER" id="PTHR19271:SF16">
    <property type="entry name" value="CYTOCHROME B"/>
    <property type="match status" value="1"/>
</dbReference>
<dbReference type="Pfam" id="PF00032">
    <property type="entry name" value="Cytochrom_B_C"/>
    <property type="match status" value="1"/>
</dbReference>
<dbReference type="Pfam" id="PF00033">
    <property type="entry name" value="Cytochrome_B"/>
    <property type="match status" value="1"/>
</dbReference>
<dbReference type="PIRSF" id="PIRSF038885">
    <property type="entry name" value="COB"/>
    <property type="match status" value="1"/>
</dbReference>
<dbReference type="SUPFAM" id="SSF81648">
    <property type="entry name" value="a domain/subunit of cytochrome bc1 complex (Ubiquinol-cytochrome c reductase)"/>
    <property type="match status" value="1"/>
</dbReference>
<dbReference type="SUPFAM" id="SSF81342">
    <property type="entry name" value="Transmembrane di-heme cytochromes"/>
    <property type="match status" value="1"/>
</dbReference>
<dbReference type="PROSITE" id="PS51003">
    <property type="entry name" value="CYTB_CTER"/>
    <property type="match status" value="1"/>
</dbReference>
<dbReference type="PROSITE" id="PS51002">
    <property type="entry name" value="CYTB_NTER"/>
    <property type="match status" value="1"/>
</dbReference>
<comment type="function">
    <text evidence="2">Component of the ubiquinol-cytochrome c reductase complex (complex III or cytochrome b-c1 complex) that is part of the mitochondrial respiratory chain. The b-c1 complex mediates electron transfer from ubiquinol to cytochrome c. Contributes to the generation of a proton gradient across the mitochondrial membrane that is then used for ATP synthesis.</text>
</comment>
<comment type="cofactor">
    <cofactor evidence="2">
        <name>heme b</name>
        <dbReference type="ChEBI" id="CHEBI:60344"/>
    </cofactor>
    <text evidence="2">Binds 2 heme b groups non-covalently.</text>
</comment>
<comment type="subunit">
    <text evidence="2">The cytochrome bc1 complex contains 11 subunits: 3 respiratory subunits (MT-CYB, CYC1 and UQCRFS1), 2 core proteins (UQCRC1 and UQCRC2) and 6 low-molecular weight proteins (UQCRH/QCR6, UQCRB/QCR7, UQCRQ/QCR8, UQCR10/QCR9, UQCR11/QCR10 and a cleavage product of UQCRFS1). This cytochrome bc1 complex then forms a dimer.</text>
</comment>
<comment type="subcellular location">
    <subcellularLocation>
        <location evidence="2">Mitochondrion inner membrane</location>
        <topology evidence="2">Multi-pass membrane protein</topology>
    </subcellularLocation>
</comment>
<comment type="miscellaneous">
    <text evidence="1">Heme 1 (or BL or b562) is low-potential and absorbs at about 562 nm, and heme 2 (or BH or b566) is high-potential and absorbs at about 566 nm.</text>
</comment>
<comment type="similarity">
    <text evidence="3 4">Belongs to the cytochrome b family.</text>
</comment>
<comment type="caution">
    <text evidence="2">The full-length protein contains only eight transmembrane helices, not nine as predicted by bioinformatics tools.</text>
</comment>
<geneLocation type="mitochondrion"/>
<sequence length="379" mass="42739">MTSPRKTHPLKKMINNSFIDLPTPSNISFWWNLGSLLGACLIIQITTGLFLAMHYTPDTQTAFSSVAHITRDVNHGWTIRYMHANGASMFFTCLFLHIGRGLYYGSFLSRETWNIGTILLLTTMATAFMGYVLPWGQMSLWGATVITNLLSAIPYIGSNLVEWVWGGFSVDKATLTRFFTFHFVLPFIIAALATIHLLFLHETGSHNPSGMTSNPDKITFHPYYTIKDILGLILLLLLLMSLTLFMPDLLTDPDNYTLANPLSTPPHIKPEWYFLFAYAILRSIPNKLGGVLALVLSILVLMIIPTTHLSNQQSMTFRPITQIMFWMLTANLLTLTWIGGQPVEYPFIIIGQIASIMYFLIITTLIPLSALIENKLLKW</sequence>
<organism>
    <name type="scientific">Saimiri sciureus</name>
    <name type="common">Common squirrel monkey</name>
    <dbReference type="NCBI Taxonomy" id="9521"/>
    <lineage>
        <taxon>Eukaryota</taxon>
        <taxon>Metazoa</taxon>
        <taxon>Chordata</taxon>
        <taxon>Craniata</taxon>
        <taxon>Vertebrata</taxon>
        <taxon>Euteleostomi</taxon>
        <taxon>Mammalia</taxon>
        <taxon>Eutheria</taxon>
        <taxon>Euarchontoglires</taxon>
        <taxon>Primates</taxon>
        <taxon>Haplorrhini</taxon>
        <taxon>Platyrrhini</taxon>
        <taxon>Cebidae</taxon>
        <taxon>Saimiriinae</taxon>
        <taxon>Saimiri</taxon>
    </lineage>
</organism>
<name>CYB_SAISC</name>
<gene>
    <name type="primary">MT-CYB</name>
    <name type="synonym">COB</name>
    <name type="synonym">CYTB</name>
    <name type="synonym">MTCYB</name>
</gene>
<accession>Q35930</accession>
<accession>Q35932</accession>